<evidence type="ECO:0000250" key="1"/>
<evidence type="ECO:0000255" key="2">
    <source>
        <dbReference type="PROSITE-ProRule" id="PRU00223"/>
    </source>
</evidence>
<evidence type="ECO:0000303" key="3">
    <source>
    </source>
</evidence>
<evidence type="ECO:0000305" key="4"/>
<organism>
    <name type="scientific">Arabidopsis thaliana</name>
    <name type="common">Mouse-ear cress</name>
    <dbReference type="NCBI Taxonomy" id="3702"/>
    <lineage>
        <taxon>Eukaryota</taxon>
        <taxon>Viridiplantae</taxon>
        <taxon>Streptophyta</taxon>
        <taxon>Embryophyta</taxon>
        <taxon>Tracheophyta</taxon>
        <taxon>Spermatophyta</taxon>
        <taxon>Magnoliopsida</taxon>
        <taxon>eudicotyledons</taxon>
        <taxon>Gunneridae</taxon>
        <taxon>Pentapetalae</taxon>
        <taxon>rosids</taxon>
        <taxon>malvids</taxon>
        <taxon>Brassicales</taxon>
        <taxon>Brassicaceae</taxon>
        <taxon>Camelineae</taxon>
        <taxon>Arabidopsis</taxon>
    </lineage>
</organism>
<sequence length="313" mass="34894">MEMMNWERRSLLNELIHGLKAAKQLQGSSSPSLSASSSYLTTEIKENLLHNIVSSFKKAILMLNGSTTQHNPTIELAPDPLAHPGKVPGSPASITGNPRSEEFFNVRSKEFNLSSKKRKMLPKWTEQVRISPERGLEGPHDDIFSWRKYGQKDILGAKFPRSYYRCTFRNTQYCWATKQVQRSDGDPTIFEVTYRGTHTCSQGIPLPEKRETKPKHTVAVNYQNLRASLTVRTGGLGSEAFSFPVTSPLYTYESINGGGTFYHHVGSSGPSDFTGLISTNTSTGSSPIFDVNFQFDPTAEINTGFPTFFHNSI</sequence>
<feature type="chain" id="PRO_0000133682" description="Probable WRKY transcription factor 41">
    <location>
        <begin position="1"/>
        <end position="313"/>
    </location>
</feature>
<feature type="DNA-binding region" description="WRKY" evidence="2">
    <location>
        <begin position="135"/>
        <end position="203"/>
    </location>
</feature>
<feature type="splice variant" id="VSP_007128" description="In isoform 2." evidence="3">
    <location>
        <begin position="27"/>
        <end position="58"/>
    </location>
</feature>
<proteinExistence type="evidence at protein level"/>
<gene>
    <name type="primary">WRKY41</name>
    <name type="ordered locus">At4g11070</name>
    <name type="ORF">F2P3.16</name>
    <name type="ORF">T22B4.50</name>
</gene>
<comment type="function">
    <text evidence="1">Transcription factor. Interacts specifically with the W box (5'-(T)TGAC[CT]-3'), a frequently occurring elicitor-responsive cis-acting element (By similarity).</text>
</comment>
<comment type="interaction">
    <interactant intactId="EBI-15202502">
        <id>Q8H0Y8</id>
    </interactant>
    <interactant intactId="EBI-21138980">
        <id>Q8VYP6</id>
        <label>At5g11010</label>
    </interactant>
    <organismsDiffer>false</organismsDiffer>
    <experiments>3</experiments>
</comment>
<comment type="interaction">
    <interactant intactId="EBI-15202502">
        <id>Q8H0Y8</id>
    </interactant>
    <interactant intactId="EBI-3946710">
        <id>Q9M1R4</id>
        <label>IAA30</label>
    </interactant>
    <organismsDiffer>false</organismsDiffer>
    <experiments>3</experiments>
</comment>
<comment type="interaction">
    <interactant intactId="EBI-15202502">
        <id>Q8H0Y8</id>
    </interactant>
    <interactant intactId="EBI-25506855">
        <id>O23160</id>
        <label>MYB73</label>
    </interactant>
    <organismsDiffer>false</organismsDiffer>
    <experiments>3</experiments>
</comment>
<comment type="interaction">
    <interactant intactId="EBI-15202502">
        <id>Q8H0Y8</id>
    </interactant>
    <interactant intactId="EBI-15192297">
        <id>Q9LQF0</id>
        <label>TCP23</label>
    </interactant>
    <organismsDiffer>false</organismsDiffer>
    <experiments>3</experiments>
</comment>
<comment type="interaction">
    <interactant intactId="EBI-15202502">
        <id>Q8H0Y8</id>
    </interactant>
    <interactant intactId="EBI-4424568">
        <id>Q9LVG2</id>
        <label>TOE2</label>
    </interactant>
    <organismsDiffer>false</organismsDiffer>
    <experiments>3</experiments>
</comment>
<comment type="interaction">
    <interactant intactId="EBI-15202502">
        <id>Q8H0Y8</id>
    </interactant>
    <interactant intactId="EBI-1993263">
        <id>Q8GWF1</id>
        <label>WRKY38</label>
    </interactant>
    <organismsDiffer>false</organismsDiffer>
    <experiments>5</experiments>
</comment>
<comment type="subcellular location">
    <subcellularLocation>
        <location evidence="4">Nucleus</location>
    </subcellularLocation>
</comment>
<comment type="alternative products">
    <event type="alternative splicing"/>
    <isoform>
        <id>Q8H0Y8-1</id>
        <name>1</name>
        <sequence type="displayed"/>
    </isoform>
    <isoform>
        <id>Q8H0Y8-2</id>
        <name>2</name>
        <sequence type="described" ref="VSP_007128"/>
    </isoform>
</comment>
<comment type="similarity">
    <text evidence="4">Belongs to the WRKY group III family.</text>
</comment>
<name>WRK41_ARATH</name>
<dbReference type="EMBL" id="AF442396">
    <property type="protein sequence ID" value="AAL35289.1"/>
    <property type="molecule type" value="mRNA"/>
</dbReference>
<dbReference type="EMBL" id="AF080120">
    <property type="protein sequence ID" value="AAC35548.1"/>
    <property type="molecule type" value="Genomic_DNA"/>
</dbReference>
<dbReference type="EMBL" id="AL049876">
    <property type="protein sequence ID" value="CAB43042.1"/>
    <property type="molecule type" value="Genomic_DNA"/>
</dbReference>
<dbReference type="EMBL" id="AL161518">
    <property type="protein sequence ID" value="CAB81208.1"/>
    <property type="molecule type" value="Genomic_DNA"/>
</dbReference>
<dbReference type="EMBL" id="CP002687">
    <property type="protein sequence ID" value="AEE82968.1"/>
    <property type="molecule type" value="Genomic_DNA"/>
</dbReference>
<dbReference type="EMBL" id="CP002687">
    <property type="protein sequence ID" value="AEE82969.1"/>
    <property type="molecule type" value="Genomic_DNA"/>
</dbReference>
<dbReference type="EMBL" id="BT001107">
    <property type="protein sequence ID" value="AAN64171.1"/>
    <property type="molecule type" value="mRNA"/>
</dbReference>
<dbReference type="EMBL" id="AY133686">
    <property type="protein sequence ID" value="AAM91620.1"/>
    <property type="molecule type" value="mRNA"/>
</dbReference>
<dbReference type="PIR" id="T01927">
    <property type="entry name" value="T01927"/>
</dbReference>
<dbReference type="RefSeq" id="NP_192845.1">
    <molecule id="Q8H0Y8-1"/>
    <property type="nucleotide sequence ID" value="NM_117177.3"/>
</dbReference>
<dbReference type="RefSeq" id="NP_849358.1">
    <molecule id="Q8H0Y8-2"/>
    <property type="nucleotide sequence ID" value="NM_179027.1"/>
</dbReference>
<dbReference type="SMR" id="Q8H0Y8"/>
<dbReference type="BioGRID" id="12007">
    <property type="interactions" value="10"/>
</dbReference>
<dbReference type="FunCoup" id="Q8H0Y8">
    <property type="interactions" value="4"/>
</dbReference>
<dbReference type="IntAct" id="Q8H0Y8">
    <property type="interactions" value="10"/>
</dbReference>
<dbReference type="STRING" id="3702.Q8H0Y8"/>
<dbReference type="iPTMnet" id="Q8H0Y8"/>
<dbReference type="PaxDb" id="3702-AT4G11070.1"/>
<dbReference type="EnsemblPlants" id="AT4G11070.1">
    <molecule id="Q8H0Y8-1"/>
    <property type="protein sequence ID" value="AT4G11070.1"/>
    <property type="gene ID" value="AT4G11070"/>
</dbReference>
<dbReference type="EnsemblPlants" id="AT4G11070.2">
    <molecule id="Q8H0Y8-2"/>
    <property type="protein sequence ID" value="AT4G11070.2"/>
    <property type="gene ID" value="AT4G11070"/>
</dbReference>
<dbReference type="GeneID" id="826708"/>
<dbReference type="Gramene" id="AT4G11070.1">
    <molecule id="Q8H0Y8-1"/>
    <property type="protein sequence ID" value="AT4G11070.1"/>
    <property type="gene ID" value="AT4G11070"/>
</dbReference>
<dbReference type="Gramene" id="AT4G11070.2">
    <molecule id="Q8H0Y8-2"/>
    <property type="protein sequence ID" value="AT4G11070.2"/>
    <property type="gene ID" value="AT4G11070"/>
</dbReference>
<dbReference type="KEGG" id="ath:AT4G11070"/>
<dbReference type="Araport" id="AT4G11070"/>
<dbReference type="TAIR" id="AT4G11070">
    <property type="gene designation" value="WRKY41"/>
</dbReference>
<dbReference type="eggNOG" id="ENOG502QPRM">
    <property type="taxonomic scope" value="Eukaryota"/>
</dbReference>
<dbReference type="InParanoid" id="Q8H0Y8"/>
<dbReference type="OMA" id="NQTYNCA"/>
<dbReference type="PhylomeDB" id="Q8H0Y8"/>
<dbReference type="PRO" id="PR:Q8H0Y8"/>
<dbReference type="Proteomes" id="UP000006548">
    <property type="component" value="Chromosome 4"/>
</dbReference>
<dbReference type="ExpressionAtlas" id="Q8H0Y8">
    <property type="expression patterns" value="baseline and differential"/>
</dbReference>
<dbReference type="GO" id="GO:0005634">
    <property type="term" value="C:nucleus"/>
    <property type="evidence" value="ECO:0007669"/>
    <property type="project" value="UniProtKB-SubCell"/>
</dbReference>
<dbReference type="GO" id="GO:0003700">
    <property type="term" value="F:DNA-binding transcription factor activity"/>
    <property type="evidence" value="ECO:0000250"/>
    <property type="project" value="TAIR"/>
</dbReference>
<dbReference type="GO" id="GO:0043565">
    <property type="term" value="F:sequence-specific DNA binding"/>
    <property type="evidence" value="ECO:0007669"/>
    <property type="project" value="InterPro"/>
</dbReference>
<dbReference type="FunFam" id="2.20.25.80:FF:000009">
    <property type="entry name" value="WRKY transcription factor 53"/>
    <property type="match status" value="1"/>
</dbReference>
<dbReference type="Gene3D" id="2.20.25.80">
    <property type="entry name" value="WRKY domain"/>
    <property type="match status" value="1"/>
</dbReference>
<dbReference type="InterPro" id="IPR003657">
    <property type="entry name" value="WRKY_dom"/>
</dbReference>
<dbReference type="InterPro" id="IPR036576">
    <property type="entry name" value="WRKY_dom_sf"/>
</dbReference>
<dbReference type="InterPro" id="IPR044810">
    <property type="entry name" value="WRKY_plant"/>
</dbReference>
<dbReference type="PANTHER" id="PTHR32096">
    <property type="entry name" value="WRKY TRANSCRIPTION FACTOR 30-RELATED-RELATED"/>
    <property type="match status" value="1"/>
</dbReference>
<dbReference type="PANTHER" id="PTHR32096:SF36">
    <property type="entry name" value="WRKY TRANSCRIPTION FACTOR 41-RELATED"/>
    <property type="match status" value="1"/>
</dbReference>
<dbReference type="Pfam" id="PF03106">
    <property type="entry name" value="WRKY"/>
    <property type="match status" value="1"/>
</dbReference>
<dbReference type="SMART" id="SM00774">
    <property type="entry name" value="WRKY"/>
    <property type="match status" value="1"/>
</dbReference>
<dbReference type="SUPFAM" id="SSF118290">
    <property type="entry name" value="WRKY DNA-binding domain"/>
    <property type="match status" value="1"/>
</dbReference>
<dbReference type="PROSITE" id="PS50811">
    <property type="entry name" value="WRKY"/>
    <property type="match status" value="1"/>
</dbReference>
<protein>
    <recommendedName>
        <fullName>Probable WRKY transcription factor 41</fullName>
    </recommendedName>
    <alternativeName>
        <fullName>WRKY DNA-binding protein 41</fullName>
    </alternativeName>
</protein>
<reference key="1">
    <citation type="submission" date="2001-10" db="EMBL/GenBank/DDBJ databases">
        <title>Arabidopsis thaliana transcription factor WRKY41.</title>
        <authorList>
            <person name="Ulker B."/>
            <person name="Kushnir S."/>
            <person name="Somssich I.E."/>
        </authorList>
    </citation>
    <scope>NUCLEOTIDE SEQUENCE [MRNA] (ISOFORM 1)</scope>
    <source>
        <strain>cv. Columbia</strain>
        <tissue>Flower</tissue>
    </source>
</reference>
<reference key="2">
    <citation type="journal article" date="1999" name="Nature">
        <title>Sequence and analysis of chromosome 4 of the plant Arabidopsis thaliana.</title>
        <authorList>
            <person name="Mayer K.F.X."/>
            <person name="Schueller C."/>
            <person name="Wambutt R."/>
            <person name="Murphy G."/>
            <person name="Volckaert G."/>
            <person name="Pohl T."/>
            <person name="Duesterhoeft A."/>
            <person name="Stiekema W."/>
            <person name="Entian K.-D."/>
            <person name="Terryn N."/>
            <person name="Harris B."/>
            <person name="Ansorge W."/>
            <person name="Brandt P."/>
            <person name="Grivell L.A."/>
            <person name="Rieger M."/>
            <person name="Weichselgartner M."/>
            <person name="de Simone V."/>
            <person name="Obermaier B."/>
            <person name="Mache R."/>
            <person name="Mueller M."/>
            <person name="Kreis M."/>
            <person name="Delseny M."/>
            <person name="Puigdomenech P."/>
            <person name="Watson M."/>
            <person name="Schmidtheini T."/>
            <person name="Reichert B."/>
            <person name="Portetelle D."/>
            <person name="Perez-Alonso M."/>
            <person name="Boutry M."/>
            <person name="Bancroft I."/>
            <person name="Vos P."/>
            <person name="Hoheisel J."/>
            <person name="Zimmermann W."/>
            <person name="Wedler H."/>
            <person name="Ridley P."/>
            <person name="Langham S.-A."/>
            <person name="McCullagh B."/>
            <person name="Bilham L."/>
            <person name="Robben J."/>
            <person name="van der Schueren J."/>
            <person name="Grymonprez B."/>
            <person name="Chuang Y.-J."/>
            <person name="Vandenbussche F."/>
            <person name="Braeken M."/>
            <person name="Weltjens I."/>
            <person name="Voet M."/>
            <person name="Bastiaens I."/>
            <person name="Aert R."/>
            <person name="Defoor E."/>
            <person name="Weitzenegger T."/>
            <person name="Bothe G."/>
            <person name="Ramsperger U."/>
            <person name="Hilbert H."/>
            <person name="Braun M."/>
            <person name="Holzer E."/>
            <person name="Brandt A."/>
            <person name="Peters S."/>
            <person name="van Staveren M."/>
            <person name="Dirkse W."/>
            <person name="Mooijman P."/>
            <person name="Klein Lankhorst R."/>
            <person name="Rose M."/>
            <person name="Hauf J."/>
            <person name="Koetter P."/>
            <person name="Berneiser S."/>
            <person name="Hempel S."/>
            <person name="Feldpausch M."/>
            <person name="Lamberth S."/>
            <person name="Van den Daele H."/>
            <person name="De Keyser A."/>
            <person name="Buysshaert C."/>
            <person name="Gielen J."/>
            <person name="Villarroel R."/>
            <person name="De Clercq R."/>
            <person name="van Montagu M."/>
            <person name="Rogers J."/>
            <person name="Cronin A."/>
            <person name="Quail M.A."/>
            <person name="Bray-Allen S."/>
            <person name="Clark L."/>
            <person name="Doggett J."/>
            <person name="Hall S."/>
            <person name="Kay M."/>
            <person name="Lennard N."/>
            <person name="McLay K."/>
            <person name="Mayes R."/>
            <person name="Pettett A."/>
            <person name="Rajandream M.A."/>
            <person name="Lyne M."/>
            <person name="Benes V."/>
            <person name="Rechmann S."/>
            <person name="Borkova D."/>
            <person name="Bloecker H."/>
            <person name="Scharfe M."/>
            <person name="Grimm M."/>
            <person name="Loehnert T.-H."/>
            <person name="Dose S."/>
            <person name="de Haan M."/>
            <person name="Maarse A.C."/>
            <person name="Schaefer M."/>
            <person name="Mueller-Auer S."/>
            <person name="Gabel C."/>
            <person name="Fuchs M."/>
            <person name="Fartmann B."/>
            <person name="Granderath K."/>
            <person name="Dauner D."/>
            <person name="Herzl A."/>
            <person name="Neumann S."/>
            <person name="Argiriou A."/>
            <person name="Vitale D."/>
            <person name="Liguori R."/>
            <person name="Piravandi E."/>
            <person name="Massenet O."/>
            <person name="Quigley F."/>
            <person name="Clabauld G."/>
            <person name="Muendlein A."/>
            <person name="Felber R."/>
            <person name="Schnabl S."/>
            <person name="Hiller R."/>
            <person name="Schmidt W."/>
            <person name="Lecharny A."/>
            <person name="Aubourg S."/>
            <person name="Chefdor F."/>
            <person name="Cooke R."/>
            <person name="Berger C."/>
            <person name="Monfort A."/>
            <person name="Casacuberta E."/>
            <person name="Gibbons T."/>
            <person name="Weber N."/>
            <person name="Vandenbol M."/>
            <person name="Bargues M."/>
            <person name="Terol J."/>
            <person name="Torres A."/>
            <person name="Perez-Perez A."/>
            <person name="Purnelle B."/>
            <person name="Bent E."/>
            <person name="Johnson S."/>
            <person name="Tacon D."/>
            <person name="Jesse T."/>
            <person name="Heijnen L."/>
            <person name="Schwarz S."/>
            <person name="Scholler P."/>
            <person name="Heber S."/>
            <person name="Francs P."/>
            <person name="Bielke C."/>
            <person name="Frishman D."/>
            <person name="Haase D."/>
            <person name="Lemcke K."/>
            <person name="Mewes H.-W."/>
            <person name="Stocker S."/>
            <person name="Zaccaria P."/>
            <person name="Bevan M."/>
            <person name="Wilson R.K."/>
            <person name="de la Bastide M."/>
            <person name="Habermann K."/>
            <person name="Parnell L."/>
            <person name="Dedhia N."/>
            <person name="Gnoj L."/>
            <person name="Schutz K."/>
            <person name="Huang E."/>
            <person name="Spiegel L."/>
            <person name="Sekhon M."/>
            <person name="Murray J."/>
            <person name="Sheet P."/>
            <person name="Cordes M."/>
            <person name="Abu-Threideh J."/>
            <person name="Stoneking T."/>
            <person name="Kalicki J."/>
            <person name="Graves T."/>
            <person name="Harmon G."/>
            <person name="Edwards J."/>
            <person name="Latreille P."/>
            <person name="Courtney L."/>
            <person name="Cloud J."/>
            <person name="Abbott A."/>
            <person name="Scott K."/>
            <person name="Johnson D."/>
            <person name="Minx P."/>
            <person name="Bentley D."/>
            <person name="Fulton B."/>
            <person name="Miller N."/>
            <person name="Greco T."/>
            <person name="Kemp K."/>
            <person name="Kramer J."/>
            <person name="Fulton L."/>
            <person name="Mardis E."/>
            <person name="Dante M."/>
            <person name="Pepin K."/>
            <person name="Hillier L.W."/>
            <person name="Nelson J."/>
            <person name="Spieth J."/>
            <person name="Ryan E."/>
            <person name="Andrews S."/>
            <person name="Geisel C."/>
            <person name="Layman D."/>
            <person name="Du H."/>
            <person name="Ali J."/>
            <person name="Berghoff A."/>
            <person name="Jones K."/>
            <person name="Drone K."/>
            <person name="Cotton M."/>
            <person name="Joshu C."/>
            <person name="Antonoiu B."/>
            <person name="Zidanic M."/>
            <person name="Strong C."/>
            <person name="Sun H."/>
            <person name="Lamar B."/>
            <person name="Yordan C."/>
            <person name="Ma P."/>
            <person name="Zhong J."/>
            <person name="Preston R."/>
            <person name="Vil D."/>
            <person name="Shekher M."/>
            <person name="Matero A."/>
            <person name="Shah R."/>
            <person name="Swaby I.K."/>
            <person name="O'Shaughnessy A."/>
            <person name="Rodriguez M."/>
            <person name="Hoffman J."/>
            <person name="Till S."/>
            <person name="Granat S."/>
            <person name="Shohdy N."/>
            <person name="Hasegawa A."/>
            <person name="Hameed A."/>
            <person name="Lodhi M."/>
            <person name="Johnson A."/>
            <person name="Chen E."/>
            <person name="Marra M.A."/>
            <person name="Martienssen R."/>
            <person name="McCombie W.R."/>
        </authorList>
    </citation>
    <scope>NUCLEOTIDE SEQUENCE [LARGE SCALE GENOMIC DNA]</scope>
    <source>
        <strain>cv. Columbia</strain>
    </source>
</reference>
<reference key="3">
    <citation type="journal article" date="2017" name="Plant J.">
        <title>Araport11: a complete reannotation of the Arabidopsis thaliana reference genome.</title>
        <authorList>
            <person name="Cheng C.Y."/>
            <person name="Krishnakumar V."/>
            <person name="Chan A.P."/>
            <person name="Thibaud-Nissen F."/>
            <person name="Schobel S."/>
            <person name="Town C.D."/>
        </authorList>
    </citation>
    <scope>GENOME REANNOTATION</scope>
    <source>
        <strain>cv. Columbia</strain>
    </source>
</reference>
<reference key="4">
    <citation type="journal article" date="2003" name="Science">
        <title>Empirical analysis of transcriptional activity in the Arabidopsis genome.</title>
        <authorList>
            <person name="Yamada K."/>
            <person name="Lim J."/>
            <person name="Dale J.M."/>
            <person name="Chen H."/>
            <person name="Shinn P."/>
            <person name="Palm C.J."/>
            <person name="Southwick A.M."/>
            <person name="Wu H.C."/>
            <person name="Kim C.J."/>
            <person name="Nguyen M."/>
            <person name="Pham P.K."/>
            <person name="Cheuk R.F."/>
            <person name="Karlin-Newmann G."/>
            <person name="Liu S.X."/>
            <person name="Lam B."/>
            <person name="Sakano H."/>
            <person name="Wu T."/>
            <person name="Yu G."/>
            <person name="Miranda M."/>
            <person name="Quach H.L."/>
            <person name="Tripp M."/>
            <person name="Chang C.H."/>
            <person name="Lee J.M."/>
            <person name="Toriumi M.J."/>
            <person name="Chan M.M."/>
            <person name="Tang C.C."/>
            <person name="Onodera C.S."/>
            <person name="Deng J.M."/>
            <person name="Akiyama K."/>
            <person name="Ansari Y."/>
            <person name="Arakawa T."/>
            <person name="Banh J."/>
            <person name="Banno F."/>
            <person name="Bowser L."/>
            <person name="Brooks S.Y."/>
            <person name="Carninci P."/>
            <person name="Chao Q."/>
            <person name="Choy N."/>
            <person name="Enju A."/>
            <person name="Goldsmith A.D."/>
            <person name="Gurjal M."/>
            <person name="Hansen N.F."/>
            <person name="Hayashizaki Y."/>
            <person name="Johnson-Hopson C."/>
            <person name="Hsuan V.W."/>
            <person name="Iida K."/>
            <person name="Karnes M."/>
            <person name="Khan S."/>
            <person name="Koesema E."/>
            <person name="Ishida J."/>
            <person name="Jiang P.X."/>
            <person name="Jones T."/>
            <person name="Kawai J."/>
            <person name="Kamiya A."/>
            <person name="Meyers C."/>
            <person name="Nakajima M."/>
            <person name="Narusaka M."/>
            <person name="Seki M."/>
            <person name="Sakurai T."/>
            <person name="Satou M."/>
            <person name="Tamse R."/>
            <person name="Vaysberg M."/>
            <person name="Wallender E.K."/>
            <person name="Wong C."/>
            <person name="Yamamura Y."/>
            <person name="Yuan S."/>
            <person name="Shinozaki K."/>
            <person name="Davis R.W."/>
            <person name="Theologis A."/>
            <person name="Ecker J.R."/>
        </authorList>
    </citation>
    <scope>NUCLEOTIDE SEQUENCE [LARGE SCALE MRNA] (ISOFORMS 1 AND 2)</scope>
    <source>
        <strain>cv. Columbia</strain>
    </source>
</reference>
<accession>Q8H0Y8</accession>
<accession>O82511</accession>
<keyword id="KW-0025">Alternative splicing</keyword>
<keyword id="KW-0238">DNA-binding</keyword>
<keyword id="KW-0539">Nucleus</keyword>
<keyword id="KW-1185">Reference proteome</keyword>
<keyword id="KW-0804">Transcription</keyword>
<keyword id="KW-0805">Transcription regulation</keyword>